<evidence type="ECO:0000250" key="1">
    <source>
        <dbReference type="UniProtKB" id="A2XE98"/>
    </source>
</evidence>
<evidence type="ECO:0000250" key="2">
    <source>
        <dbReference type="UniProtKB" id="O04986"/>
    </source>
</evidence>
<evidence type="ECO:0000250" key="3">
    <source>
        <dbReference type="UniProtKB" id="P68168"/>
    </source>
</evidence>
<evidence type="ECO:0000250" key="4">
    <source>
        <dbReference type="UniProtKB" id="Q42831"/>
    </source>
</evidence>
<evidence type="ECO:0000255" key="5">
    <source>
        <dbReference type="PROSITE-ProRule" id="PRU00238"/>
    </source>
</evidence>
<evidence type="ECO:0000303" key="6">
    <source>
    </source>
</evidence>
<evidence type="ECO:0000305" key="7"/>
<gene>
    <name evidence="6" type="primary">HB2</name>
    <name evidence="6" type="synonym">GLB2</name>
</gene>
<feature type="chain" id="PRO_0000193015" description="Anaerobic nitrite reductase HB2">
    <location>
        <begin position="1"/>
        <end position="159"/>
    </location>
</feature>
<feature type="domain" description="Globin" evidence="5">
    <location>
        <begin position="2"/>
        <end position="152"/>
    </location>
</feature>
<feature type="short sequence motif" description="Homodimerization" evidence="2">
    <location>
        <begin position="35"/>
        <end position="39"/>
    </location>
</feature>
<feature type="short sequence motif" description="Homodimerization" evidence="2">
    <location>
        <begin position="105"/>
        <end position="117"/>
    </location>
</feature>
<feature type="binding site" evidence="3">
    <location>
        <position position="45"/>
    </location>
    <ligand>
        <name>heme b</name>
        <dbReference type="ChEBI" id="CHEBI:60344"/>
    </ligand>
</feature>
<feature type="binding site" evidence="2">
    <location>
        <position position="59"/>
    </location>
    <ligand>
        <name>heme b</name>
        <dbReference type="ChEBI" id="CHEBI:60344"/>
    </ligand>
</feature>
<feature type="binding site" description="distal binding residue" evidence="5">
    <location>
        <position position="63"/>
    </location>
    <ligand>
        <name>heme b</name>
        <dbReference type="ChEBI" id="CHEBI:60344"/>
    </ligand>
    <ligandPart>
        <name>Fe</name>
        <dbReference type="ChEBI" id="CHEBI:18248"/>
    </ligandPart>
</feature>
<feature type="binding site" description="proximal binding residue" evidence="5">
    <location>
        <position position="98"/>
    </location>
    <ligand>
        <name>heme b</name>
        <dbReference type="ChEBI" id="CHEBI:60344"/>
    </ligand>
    <ligandPart>
        <name>Fe</name>
        <dbReference type="ChEBI" id="CHEBI:18248"/>
    </ligandPart>
</feature>
<feature type="site" description="Homodimerization" evidence="2">
    <location>
        <position position="133"/>
    </location>
</feature>
<proteinExistence type="inferred from homology"/>
<protein>
    <recommendedName>
        <fullName evidence="2">Anaerobic nitrite reductase HB2</fullName>
        <ecNumber evidence="2">1.7.2.-</ecNumber>
    </recommendedName>
    <alternativeName>
        <fullName evidence="6">GOShi GLB2</fullName>
        <shortName evidence="6">Hb2</shortName>
    </alternativeName>
    <alternativeName>
        <fullName>Non-symbiotic hemoglobin 2</fullName>
    </alternativeName>
</protein>
<accession>Q93Y92</accession>
<reference key="1">
    <citation type="journal article" date="2001" name="Plant Mol. Biol.">
        <title>Expression and evolution of functionally distinct haemoglobin genes in plants.</title>
        <authorList>
            <person name="Hunt P.W."/>
            <person name="Watts R.A."/>
            <person name="Trevaskis B."/>
            <person name="Llewellyn D.J."/>
            <person name="Burnell J."/>
            <person name="Dennis E.S."/>
            <person name="Peacock W.J."/>
        </authorList>
    </citation>
    <scope>NUCLEOTIDE SEQUENCE [GENOMIC DNA]</scope>
</reference>
<sequence>MGFTEKQEGLVKESWEVLKQDIPHSSLRFFSLILEIAPGAKNMFSFLRESEEIPQNNPKLKAHAVKVFKMTCESAIQLREKGEVVVADTTLKYLGTVHVKSGVKDPHFEVVKEALLRTIEEAIGEEKWNEEMKNAWGEAYDQLAEAIKAEMKNHHDETA</sequence>
<dbReference type="EC" id="1.7.2.-" evidence="2"/>
<dbReference type="EMBL" id="AY026340">
    <property type="protein sequence ID" value="AAK21604.1"/>
    <property type="molecule type" value="Genomic_DNA"/>
</dbReference>
<dbReference type="EMBL" id="AY026339">
    <property type="protein sequence ID" value="AAK21604.1"/>
    <property type="status" value="JOINED"/>
    <property type="molecule type" value="Genomic_DNA"/>
</dbReference>
<dbReference type="SMR" id="Q93Y92"/>
<dbReference type="STRING" id="3635.Q93Y92"/>
<dbReference type="PaxDb" id="3635-Q93Y92"/>
<dbReference type="OMA" id="WIRESWN"/>
<dbReference type="Proteomes" id="UP000189702">
    <property type="component" value="Unplaced"/>
</dbReference>
<dbReference type="GO" id="GO:0005737">
    <property type="term" value="C:cytoplasm"/>
    <property type="evidence" value="ECO:0007669"/>
    <property type="project" value="UniProtKB-SubCell"/>
</dbReference>
<dbReference type="GO" id="GO:0005634">
    <property type="term" value="C:nucleus"/>
    <property type="evidence" value="ECO:0007669"/>
    <property type="project" value="UniProtKB-SubCell"/>
</dbReference>
<dbReference type="GO" id="GO:0020037">
    <property type="term" value="F:heme binding"/>
    <property type="evidence" value="ECO:0007669"/>
    <property type="project" value="InterPro"/>
</dbReference>
<dbReference type="GO" id="GO:0046872">
    <property type="term" value="F:metal ion binding"/>
    <property type="evidence" value="ECO:0007669"/>
    <property type="project" value="UniProtKB-KW"/>
</dbReference>
<dbReference type="GO" id="GO:0016491">
    <property type="term" value="F:oxidoreductase activity"/>
    <property type="evidence" value="ECO:0007669"/>
    <property type="project" value="UniProtKB-KW"/>
</dbReference>
<dbReference type="GO" id="GO:0019825">
    <property type="term" value="F:oxygen binding"/>
    <property type="evidence" value="ECO:0007669"/>
    <property type="project" value="InterPro"/>
</dbReference>
<dbReference type="CDD" id="cd08923">
    <property type="entry name" value="class1-2_nsHbs_Lbs"/>
    <property type="match status" value="1"/>
</dbReference>
<dbReference type="Gene3D" id="1.10.490.10">
    <property type="entry name" value="Globins"/>
    <property type="match status" value="1"/>
</dbReference>
<dbReference type="InterPro" id="IPR000971">
    <property type="entry name" value="Globin"/>
</dbReference>
<dbReference type="InterPro" id="IPR009050">
    <property type="entry name" value="Globin-like_sf"/>
</dbReference>
<dbReference type="InterPro" id="IPR012292">
    <property type="entry name" value="Globin/Proto"/>
</dbReference>
<dbReference type="InterPro" id="IPR001032">
    <property type="entry name" value="Leghaemoglobin-like"/>
</dbReference>
<dbReference type="InterPro" id="IPR019824">
    <property type="entry name" value="Leghaemoglobin_Fe_BS"/>
</dbReference>
<dbReference type="PANTHER" id="PTHR22924">
    <property type="entry name" value="LEGHEMOGLOBIN-RELATED"/>
    <property type="match status" value="1"/>
</dbReference>
<dbReference type="PANTHER" id="PTHR22924:SF92">
    <property type="entry name" value="NON-SYMBIOTIC HEMOGLOBIN 2"/>
    <property type="match status" value="1"/>
</dbReference>
<dbReference type="Pfam" id="PF00042">
    <property type="entry name" value="Globin"/>
    <property type="match status" value="1"/>
</dbReference>
<dbReference type="PRINTS" id="PR00188">
    <property type="entry name" value="PLANTGLOBIN"/>
</dbReference>
<dbReference type="SUPFAM" id="SSF46458">
    <property type="entry name" value="Globin-like"/>
    <property type="match status" value="1"/>
</dbReference>
<dbReference type="PROSITE" id="PS01033">
    <property type="entry name" value="GLOBIN"/>
    <property type="match status" value="1"/>
</dbReference>
<dbReference type="PROSITE" id="PS00208">
    <property type="entry name" value="PLANT_GLOBIN"/>
    <property type="match status" value="1"/>
</dbReference>
<name>HBL2_GOSHI</name>
<organism>
    <name type="scientific">Gossypium hirsutum</name>
    <name type="common">Upland cotton</name>
    <name type="synonym">Gossypium mexicanum</name>
    <dbReference type="NCBI Taxonomy" id="3635"/>
    <lineage>
        <taxon>Eukaryota</taxon>
        <taxon>Viridiplantae</taxon>
        <taxon>Streptophyta</taxon>
        <taxon>Embryophyta</taxon>
        <taxon>Tracheophyta</taxon>
        <taxon>Spermatophyta</taxon>
        <taxon>Magnoliopsida</taxon>
        <taxon>eudicotyledons</taxon>
        <taxon>Gunneridae</taxon>
        <taxon>Pentapetalae</taxon>
        <taxon>rosids</taxon>
        <taxon>malvids</taxon>
        <taxon>Malvales</taxon>
        <taxon>Malvaceae</taxon>
        <taxon>Malvoideae</taxon>
        <taxon>Gossypium</taxon>
    </lineage>
</organism>
<keyword id="KW-0963">Cytoplasm</keyword>
<keyword id="KW-0349">Heme</keyword>
<keyword id="KW-0408">Iron</keyword>
<keyword id="KW-0479">Metal-binding</keyword>
<keyword id="KW-0539">Nucleus</keyword>
<keyword id="KW-0560">Oxidoreductase</keyword>
<keyword id="KW-1185">Reference proteome</keyword>
<comment type="function">
    <text evidence="2 4">Phytoglobin that reduces nitrite to nitric oxide (NO) under anoxic conditions (e.g. during flooding or in waterlogged soil) (By similarity). May not function as an oxygen storage or transport protein (By similarity). Has an unusually high affinity for O(2) through an hexacoordinate heme iron because of a very low dissociation constant (By similarity).</text>
</comment>
<comment type="catalytic activity">
    <reaction evidence="2">
        <text>Fe(III)-heme b-[protein] + nitric oxide + H2O = Fe(II)-heme b-[protein] + nitrite + 2 H(+)</text>
        <dbReference type="Rhea" id="RHEA:77711"/>
        <dbReference type="Rhea" id="RHEA-COMP:18975"/>
        <dbReference type="Rhea" id="RHEA-COMP:18976"/>
        <dbReference type="ChEBI" id="CHEBI:15377"/>
        <dbReference type="ChEBI" id="CHEBI:15378"/>
        <dbReference type="ChEBI" id="CHEBI:16301"/>
        <dbReference type="ChEBI" id="CHEBI:16480"/>
        <dbReference type="ChEBI" id="CHEBI:55376"/>
        <dbReference type="ChEBI" id="CHEBI:60344"/>
    </reaction>
    <physiologicalReaction direction="right-to-left" evidence="2">
        <dbReference type="Rhea" id="RHEA:77713"/>
    </physiologicalReaction>
</comment>
<comment type="cofactor">
    <cofactor evidence="3">
        <name>heme b</name>
        <dbReference type="ChEBI" id="CHEBI:60344"/>
    </cofactor>
    <text evidence="3">Binds 1 heme group per subunit.</text>
</comment>
<comment type="subunit">
    <text evidence="2">Homodimer.</text>
</comment>
<comment type="subcellular location">
    <subcellularLocation>
        <location evidence="1">Cytoplasm</location>
    </subcellularLocation>
    <subcellularLocation>
        <location evidence="1">Nucleus</location>
    </subcellularLocation>
</comment>
<comment type="similarity">
    <text evidence="7">Belongs to the plant globin family.</text>
</comment>